<organism>
    <name type="scientific">Staphylococcus aureus (strain NCTC 8325 / PS 47)</name>
    <dbReference type="NCBI Taxonomy" id="93061"/>
    <lineage>
        <taxon>Bacteria</taxon>
        <taxon>Bacillati</taxon>
        <taxon>Bacillota</taxon>
        <taxon>Bacilli</taxon>
        <taxon>Bacillales</taxon>
        <taxon>Staphylococcaceae</taxon>
        <taxon>Staphylococcus</taxon>
    </lineage>
</organism>
<evidence type="ECO:0000255" key="1">
    <source>
        <dbReference type="HAMAP-Rule" id="MF_00080"/>
    </source>
</evidence>
<sequence length="175" mass="20213">MSTIAKDQTQINDKIRAKELRLIGQDGEQIGVKSKREALKMAERVDLDLVVVAPNAKPPVARIMDYGKFKFEQQKKEKEMKKKQKIINVKEIRLSPTIEEHDFQTKLKNGRKFLTKGDKCKVSIRFRGRAITHKEIGQRVLEKYADECKDIATVEQKPKMDGRQMFIMLAPTAEK</sequence>
<gene>
    <name evidence="1" type="primary">infC</name>
    <name type="ordered locus">SAOUHSC_01786</name>
</gene>
<name>IF3_STAA8</name>
<feature type="chain" id="PRO_1000004567" description="Translation initiation factor IF-3">
    <location>
        <begin position="1"/>
        <end position="175"/>
    </location>
</feature>
<comment type="function">
    <text evidence="1">IF-3 binds to the 30S ribosomal subunit and shifts the equilibrium between 70S ribosomes and their 50S and 30S subunits in favor of the free subunits, thus enhancing the availability of 30S subunits on which protein synthesis initiation begins.</text>
</comment>
<comment type="subunit">
    <text evidence="1">Monomer.</text>
</comment>
<comment type="subcellular location">
    <subcellularLocation>
        <location evidence="1">Cytoplasm</location>
    </subcellularLocation>
</comment>
<comment type="similarity">
    <text evidence="1">Belongs to the IF-3 family.</text>
</comment>
<proteinExistence type="inferred from homology"/>
<accession>Q2FXP9</accession>
<keyword id="KW-0963">Cytoplasm</keyword>
<keyword id="KW-0396">Initiation factor</keyword>
<keyword id="KW-0648">Protein biosynthesis</keyword>
<keyword id="KW-1185">Reference proteome</keyword>
<protein>
    <recommendedName>
        <fullName evidence="1">Translation initiation factor IF-3</fullName>
    </recommendedName>
</protein>
<dbReference type="EMBL" id="CP000253">
    <property type="protein sequence ID" value="ABD30855.1"/>
    <property type="molecule type" value="Genomic_DNA"/>
</dbReference>
<dbReference type="RefSeq" id="WP_011447026.1">
    <property type="nucleotide sequence ID" value="NC_007795.1"/>
</dbReference>
<dbReference type="RefSeq" id="YP_500291.1">
    <property type="nucleotide sequence ID" value="NC_007795.1"/>
</dbReference>
<dbReference type="SMR" id="Q2FXP9"/>
<dbReference type="STRING" id="93061.SAOUHSC_01786"/>
<dbReference type="PaxDb" id="1280-SAXN108_1707"/>
<dbReference type="GeneID" id="3920428"/>
<dbReference type="KEGG" id="sao:SAOUHSC_01786"/>
<dbReference type="PATRIC" id="fig|93061.5.peg.1628"/>
<dbReference type="eggNOG" id="COG0290">
    <property type="taxonomic scope" value="Bacteria"/>
</dbReference>
<dbReference type="HOGENOM" id="CLU_054919_3_2_9"/>
<dbReference type="OrthoDB" id="9806014at2"/>
<dbReference type="Proteomes" id="UP000008816">
    <property type="component" value="Chromosome"/>
</dbReference>
<dbReference type="GO" id="GO:0005829">
    <property type="term" value="C:cytosol"/>
    <property type="evidence" value="ECO:0000318"/>
    <property type="project" value="GO_Central"/>
</dbReference>
<dbReference type="GO" id="GO:0043022">
    <property type="term" value="F:ribosome binding"/>
    <property type="evidence" value="ECO:0000318"/>
    <property type="project" value="GO_Central"/>
</dbReference>
<dbReference type="GO" id="GO:0003743">
    <property type="term" value="F:translation initiation factor activity"/>
    <property type="evidence" value="ECO:0000318"/>
    <property type="project" value="GO_Central"/>
</dbReference>
<dbReference type="GO" id="GO:0032790">
    <property type="term" value="P:ribosome disassembly"/>
    <property type="evidence" value="ECO:0000318"/>
    <property type="project" value="GO_Central"/>
</dbReference>
<dbReference type="FunFam" id="3.10.20.80:FF:000001">
    <property type="entry name" value="Translation initiation factor IF-3"/>
    <property type="match status" value="1"/>
</dbReference>
<dbReference type="FunFam" id="3.30.110.10:FF:000001">
    <property type="entry name" value="Translation initiation factor IF-3"/>
    <property type="match status" value="1"/>
</dbReference>
<dbReference type="Gene3D" id="3.30.110.10">
    <property type="entry name" value="Translation initiation factor 3 (IF-3), C-terminal domain"/>
    <property type="match status" value="1"/>
</dbReference>
<dbReference type="Gene3D" id="3.10.20.80">
    <property type="entry name" value="Translation initiation factor 3 (IF-3), N-terminal domain"/>
    <property type="match status" value="1"/>
</dbReference>
<dbReference type="HAMAP" id="MF_00080">
    <property type="entry name" value="IF_3"/>
    <property type="match status" value="1"/>
</dbReference>
<dbReference type="InterPro" id="IPR036788">
    <property type="entry name" value="T_IF-3_C_sf"/>
</dbReference>
<dbReference type="InterPro" id="IPR036787">
    <property type="entry name" value="T_IF-3_N_sf"/>
</dbReference>
<dbReference type="InterPro" id="IPR019813">
    <property type="entry name" value="Translation_initiation_fac3_CS"/>
</dbReference>
<dbReference type="InterPro" id="IPR001288">
    <property type="entry name" value="Translation_initiation_fac_3"/>
</dbReference>
<dbReference type="InterPro" id="IPR019815">
    <property type="entry name" value="Translation_initiation_fac_3_C"/>
</dbReference>
<dbReference type="InterPro" id="IPR019814">
    <property type="entry name" value="Translation_initiation_fac_3_N"/>
</dbReference>
<dbReference type="NCBIfam" id="TIGR00168">
    <property type="entry name" value="infC"/>
    <property type="match status" value="1"/>
</dbReference>
<dbReference type="PANTHER" id="PTHR10938">
    <property type="entry name" value="TRANSLATION INITIATION FACTOR IF-3"/>
    <property type="match status" value="1"/>
</dbReference>
<dbReference type="PANTHER" id="PTHR10938:SF0">
    <property type="entry name" value="TRANSLATION INITIATION FACTOR IF-3, MITOCHONDRIAL"/>
    <property type="match status" value="1"/>
</dbReference>
<dbReference type="Pfam" id="PF00707">
    <property type="entry name" value="IF3_C"/>
    <property type="match status" value="1"/>
</dbReference>
<dbReference type="Pfam" id="PF05198">
    <property type="entry name" value="IF3_N"/>
    <property type="match status" value="1"/>
</dbReference>
<dbReference type="SUPFAM" id="SSF55200">
    <property type="entry name" value="Translation initiation factor IF3, C-terminal domain"/>
    <property type="match status" value="1"/>
</dbReference>
<dbReference type="SUPFAM" id="SSF54364">
    <property type="entry name" value="Translation initiation factor IF3, N-terminal domain"/>
    <property type="match status" value="1"/>
</dbReference>
<dbReference type="PROSITE" id="PS00938">
    <property type="entry name" value="IF3"/>
    <property type="match status" value="1"/>
</dbReference>
<reference key="1">
    <citation type="book" date="2006" name="Gram positive pathogens, 2nd edition">
        <title>The Staphylococcus aureus NCTC 8325 genome.</title>
        <editorList>
            <person name="Fischetti V."/>
            <person name="Novick R."/>
            <person name="Ferretti J."/>
            <person name="Portnoy D."/>
            <person name="Rood J."/>
        </editorList>
        <authorList>
            <person name="Gillaspy A.F."/>
            <person name="Worrell V."/>
            <person name="Orvis J."/>
            <person name="Roe B.A."/>
            <person name="Dyer D.W."/>
            <person name="Iandolo J.J."/>
        </authorList>
    </citation>
    <scope>NUCLEOTIDE SEQUENCE [LARGE SCALE GENOMIC DNA]</scope>
    <source>
        <strain>NCTC 8325 / PS 47</strain>
    </source>
</reference>